<accession>A9N0H5</accession>
<feature type="chain" id="PRO_1000084040" description="tRNA/tmRNA (uracil-C(5))-methyltransferase">
    <location>
        <begin position="1"/>
        <end position="366"/>
    </location>
</feature>
<feature type="active site" description="Nucleophile" evidence="1">
    <location>
        <position position="324"/>
    </location>
</feature>
<feature type="active site" description="Proton acceptor" evidence="1">
    <location>
        <position position="358"/>
    </location>
</feature>
<feature type="binding site" evidence="1">
    <location>
        <position position="190"/>
    </location>
    <ligand>
        <name>S-adenosyl-L-methionine</name>
        <dbReference type="ChEBI" id="CHEBI:59789"/>
    </ligand>
</feature>
<feature type="binding site" evidence="1">
    <location>
        <position position="218"/>
    </location>
    <ligand>
        <name>S-adenosyl-L-methionine</name>
        <dbReference type="ChEBI" id="CHEBI:59789"/>
    </ligand>
</feature>
<feature type="binding site" evidence="1">
    <location>
        <position position="223"/>
    </location>
    <ligand>
        <name>S-adenosyl-L-methionine</name>
        <dbReference type="ChEBI" id="CHEBI:59789"/>
    </ligand>
</feature>
<feature type="binding site" evidence="1">
    <location>
        <position position="239"/>
    </location>
    <ligand>
        <name>S-adenosyl-L-methionine</name>
        <dbReference type="ChEBI" id="CHEBI:59789"/>
    </ligand>
</feature>
<feature type="binding site" evidence="1">
    <location>
        <position position="299"/>
    </location>
    <ligand>
        <name>S-adenosyl-L-methionine</name>
        <dbReference type="ChEBI" id="CHEBI:59789"/>
    </ligand>
</feature>
<dbReference type="EC" id="2.1.1.-" evidence="1"/>
<dbReference type="EC" id="2.1.1.35" evidence="1"/>
<dbReference type="EMBL" id="CP000886">
    <property type="protein sequence ID" value="ABX70404.1"/>
    <property type="molecule type" value="Genomic_DNA"/>
</dbReference>
<dbReference type="RefSeq" id="WP_000186988.1">
    <property type="nucleotide sequence ID" value="NC_010102.1"/>
</dbReference>
<dbReference type="SMR" id="A9N0H5"/>
<dbReference type="KEGG" id="spq:SPAB_05114"/>
<dbReference type="PATRIC" id="fig|1016998.12.peg.4799"/>
<dbReference type="HOGENOM" id="CLU_043022_0_0_6"/>
<dbReference type="BioCyc" id="SENT1016998:SPAB_RS20810-MONOMER"/>
<dbReference type="Proteomes" id="UP000008556">
    <property type="component" value="Chromosome"/>
</dbReference>
<dbReference type="GO" id="GO:0005829">
    <property type="term" value="C:cytosol"/>
    <property type="evidence" value="ECO:0007669"/>
    <property type="project" value="TreeGrafter"/>
</dbReference>
<dbReference type="GO" id="GO:0019843">
    <property type="term" value="F:rRNA binding"/>
    <property type="evidence" value="ECO:0007669"/>
    <property type="project" value="TreeGrafter"/>
</dbReference>
<dbReference type="GO" id="GO:0030697">
    <property type="term" value="F:tRNA (uracil(54)-C5)-methyltransferase activity, S-adenosyl methionine-dependent"/>
    <property type="evidence" value="ECO:0007669"/>
    <property type="project" value="UniProtKB-UniRule"/>
</dbReference>
<dbReference type="GO" id="GO:0000049">
    <property type="term" value="F:tRNA binding"/>
    <property type="evidence" value="ECO:0007669"/>
    <property type="project" value="TreeGrafter"/>
</dbReference>
<dbReference type="GO" id="GO:0030488">
    <property type="term" value="P:tRNA methylation"/>
    <property type="evidence" value="ECO:0007669"/>
    <property type="project" value="UniProtKB-UniRule"/>
</dbReference>
<dbReference type="CDD" id="cd02440">
    <property type="entry name" value="AdoMet_MTases"/>
    <property type="match status" value="1"/>
</dbReference>
<dbReference type="FunFam" id="2.40.50.1070:FF:000001">
    <property type="entry name" value="tRNA/tmRNA (uracil-C(5))-methyltransferase"/>
    <property type="match status" value="1"/>
</dbReference>
<dbReference type="FunFam" id="3.40.50.150:FF:000012">
    <property type="entry name" value="tRNA/tmRNA (uracil-C(5))-methyltransferase"/>
    <property type="match status" value="1"/>
</dbReference>
<dbReference type="Gene3D" id="2.40.50.1070">
    <property type="match status" value="1"/>
</dbReference>
<dbReference type="Gene3D" id="3.40.50.150">
    <property type="entry name" value="Vaccinia Virus protein VP39"/>
    <property type="match status" value="1"/>
</dbReference>
<dbReference type="HAMAP" id="MF_01011">
    <property type="entry name" value="RNA_methyltr_TrmA"/>
    <property type="match status" value="1"/>
</dbReference>
<dbReference type="InterPro" id="IPR030390">
    <property type="entry name" value="MeTrfase_TrmA_AS"/>
</dbReference>
<dbReference type="InterPro" id="IPR030391">
    <property type="entry name" value="MeTrfase_TrmA_CS"/>
</dbReference>
<dbReference type="InterPro" id="IPR029063">
    <property type="entry name" value="SAM-dependent_MTases_sf"/>
</dbReference>
<dbReference type="InterPro" id="IPR011869">
    <property type="entry name" value="TrmA_MeTrfase"/>
</dbReference>
<dbReference type="InterPro" id="IPR010280">
    <property type="entry name" value="U5_MeTrfase_fam"/>
</dbReference>
<dbReference type="NCBIfam" id="TIGR02143">
    <property type="entry name" value="trmA_only"/>
    <property type="match status" value="1"/>
</dbReference>
<dbReference type="PANTHER" id="PTHR47790">
    <property type="entry name" value="TRNA/TMRNA (URACIL-C(5))-METHYLTRANSFERASE"/>
    <property type="match status" value="1"/>
</dbReference>
<dbReference type="PANTHER" id="PTHR47790:SF2">
    <property type="entry name" value="TRNA_TMRNA (URACIL-C(5))-METHYLTRANSFERASE"/>
    <property type="match status" value="1"/>
</dbReference>
<dbReference type="Pfam" id="PF05958">
    <property type="entry name" value="tRNA_U5-meth_tr"/>
    <property type="match status" value="1"/>
</dbReference>
<dbReference type="SUPFAM" id="SSF53335">
    <property type="entry name" value="S-adenosyl-L-methionine-dependent methyltransferases"/>
    <property type="match status" value="1"/>
</dbReference>
<dbReference type="PROSITE" id="PS51687">
    <property type="entry name" value="SAM_MT_RNA_M5U"/>
    <property type="match status" value="1"/>
</dbReference>
<dbReference type="PROSITE" id="PS01230">
    <property type="entry name" value="TRMA_1"/>
    <property type="match status" value="1"/>
</dbReference>
<dbReference type="PROSITE" id="PS01231">
    <property type="entry name" value="TRMA_2"/>
    <property type="match status" value="1"/>
</dbReference>
<sequence>MTPEHLPTEQYEAQLAEKVSRLQSMMAPFSDLVPEVFRSPVSHYRMRAEFRLWHDGDDLYHIMFDQQTKSRIRVDTFPAASQLINTLMKAMIAGVRDNHALRHKLFQIDYLTTLSNQAVVSLLYHKKLDEEWREAATALRDALRAQGLNVHLIGRATKTKIELDQDYIDERLPVAGKEMIYRQVENSFTQPNAAMNIQMLEWALEVTKDSKGDLLELYCGNGNFSLALARNFNRVLATEIAKPSVAAAQYNIAANHIDNVQIIRMAAEEFTQAMNGVREFNRLQGIDLKRYQCETIFVDPPRSGLDSETEKMVQAYPRILYISCNPETLCKNLETLSQTHTVSRLALFDQFPYTHHMECGVLLTAR</sequence>
<organism>
    <name type="scientific">Salmonella paratyphi B (strain ATCC BAA-1250 / SPB7)</name>
    <dbReference type="NCBI Taxonomy" id="1016998"/>
    <lineage>
        <taxon>Bacteria</taxon>
        <taxon>Pseudomonadati</taxon>
        <taxon>Pseudomonadota</taxon>
        <taxon>Gammaproteobacteria</taxon>
        <taxon>Enterobacterales</taxon>
        <taxon>Enterobacteriaceae</taxon>
        <taxon>Salmonella</taxon>
    </lineage>
</organism>
<comment type="function">
    <text evidence="1">Dual-specificity methyltransferase that catalyzes the formation of 5-methyluridine at position 54 (m5U54) in all tRNAs, and that of position 341 (m5U341) in tmRNA (transfer-mRNA).</text>
</comment>
<comment type="catalytic activity">
    <reaction evidence="1">
        <text>uridine(54) in tRNA + S-adenosyl-L-methionine = 5-methyluridine(54) in tRNA + S-adenosyl-L-homocysteine + H(+)</text>
        <dbReference type="Rhea" id="RHEA:42712"/>
        <dbReference type="Rhea" id="RHEA-COMP:10167"/>
        <dbReference type="Rhea" id="RHEA-COMP:10193"/>
        <dbReference type="ChEBI" id="CHEBI:15378"/>
        <dbReference type="ChEBI" id="CHEBI:57856"/>
        <dbReference type="ChEBI" id="CHEBI:59789"/>
        <dbReference type="ChEBI" id="CHEBI:65315"/>
        <dbReference type="ChEBI" id="CHEBI:74447"/>
        <dbReference type="EC" id="2.1.1.35"/>
    </reaction>
</comment>
<comment type="catalytic activity">
    <reaction evidence="1">
        <text>uridine(341) in tmRNA + S-adenosyl-L-methionine = 5-methyluridine(341) in tmRNA + S-adenosyl-L-homocysteine + H(+)</text>
        <dbReference type="Rhea" id="RHEA:43612"/>
        <dbReference type="Rhea" id="RHEA-COMP:10630"/>
        <dbReference type="Rhea" id="RHEA-COMP:10631"/>
        <dbReference type="ChEBI" id="CHEBI:15378"/>
        <dbReference type="ChEBI" id="CHEBI:57856"/>
        <dbReference type="ChEBI" id="CHEBI:59789"/>
        <dbReference type="ChEBI" id="CHEBI:65315"/>
        <dbReference type="ChEBI" id="CHEBI:74447"/>
    </reaction>
</comment>
<comment type="similarity">
    <text evidence="1">Belongs to the class I-like SAM-binding methyltransferase superfamily. RNA M5U methyltransferase family. TrmA subfamily.</text>
</comment>
<gene>
    <name evidence="1" type="primary">trmA</name>
    <name type="ordered locus">SPAB_05114</name>
</gene>
<protein>
    <recommendedName>
        <fullName evidence="1">tRNA/tmRNA (uracil-C(5))-methyltransferase</fullName>
        <ecNumber evidence="1">2.1.1.-</ecNumber>
        <ecNumber evidence="1">2.1.1.35</ecNumber>
    </recommendedName>
    <alternativeName>
        <fullName evidence="1">tRNA (uracil(54)-C(5))-methyltransferase</fullName>
    </alternativeName>
    <alternativeName>
        <fullName evidence="1">tRNA(m5U54)-methyltransferase</fullName>
        <shortName evidence="1">RUMT</shortName>
    </alternativeName>
    <alternativeName>
        <fullName evidence="1">tmRNA (uracil(341)-C(5))-methyltransferase</fullName>
    </alternativeName>
</protein>
<name>TRMA_SALPB</name>
<keyword id="KW-0489">Methyltransferase</keyword>
<keyword id="KW-0949">S-adenosyl-L-methionine</keyword>
<keyword id="KW-0808">Transferase</keyword>
<keyword id="KW-0819">tRNA processing</keyword>
<reference key="1">
    <citation type="submission" date="2007-11" db="EMBL/GenBank/DDBJ databases">
        <authorList>
            <consortium name="The Salmonella enterica serovar Paratyphi B Genome Sequencing Project"/>
            <person name="McClelland M."/>
            <person name="Sanderson E.K."/>
            <person name="Porwollik S."/>
            <person name="Spieth J."/>
            <person name="Clifton W.S."/>
            <person name="Fulton R."/>
            <person name="Cordes M."/>
            <person name="Wollam A."/>
            <person name="Shah N."/>
            <person name="Pepin K."/>
            <person name="Bhonagiri V."/>
            <person name="Nash W."/>
            <person name="Johnson M."/>
            <person name="Thiruvilangam P."/>
            <person name="Wilson R."/>
        </authorList>
    </citation>
    <scope>NUCLEOTIDE SEQUENCE [LARGE SCALE GENOMIC DNA]</scope>
    <source>
        <strain>ATCC BAA-1250 / SPB7</strain>
    </source>
</reference>
<evidence type="ECO:0000255" key="1">
    <source>
        <dbReference type="HAMAP-Rule" id="MF_01011"/>
    </source>
</evidence>
<proteinExistence type="inferred from homology"/>